<dbReference type="EMBL" id="AB169536">
    <property type="protein sequence ID" value="BAE01618.1"/>
    <property type="molecule type" value="mRNA"/>
</dbReference>
<dbReference type="RefSeq" id="NP_001270424.1">
    <property type="nucleotide sequence ID" value="NM_001283495.1"/>
</dbReference>
<dbReference type="SMR" id="Q4R5K7"/>
<dbReference type="STRING" id="9541.ENSMFAP00000020924"/>
<dbReference type="eggNOG" id="KOG4034">
    <property type="taxonomic scope" value="Eukaryota"/>
</dbReference>
<dbReference type="Proteomes" id="UP000233100">
    <property type="component" value="Unplaced"/>
</dbReference>
<dbReference type="GO" id="GO:0005762">
    <property type="term" value="C:mitochondrial large ribosomal subunit"/>
    <property type="evidence" value="ECO:0007669"/>
    <property type="project" value="TreeGrafter"/>
</dbReference>
<dbReference type="GO" id="GO:0005761">
    <property type="term" value="C:mitochondrial ribosome"/>
    <property type="evidence" value="ECO:0000250"/>
    <property type="project" value="UniProtKB"/>
</dbReference>
<dbReference type="GO" id="GO:0003735">
    <property type="term" value="F:structural constituent of ribosome"/>
    <property type="evidence" value="ECO:0007669"/>
    <property type="project" value="InterPro"/>
</dbReference>
<dbReference type="GO" id="GO:0006412">
    <property type="term" value="P:translation"/>
    <property type="evidence" value="ECO:0007669"/>
    <property type="project" value="InterPro"/>
</dbReference>
<dbReference type="FunFam" id="3.30.780.10:FF:000009">
    <property type="entry name" value="39S ribosomal protein L49, mitochondrial"/>
    <property type="match status" value="1"/>
</dbReference>
<dbReference type="Gene3D" id="3.30.780.10">
    <property type="entry name" value="SUI1-like domain"/>
    <property type="match status" value="1"/>
</dbReference>
<dbReference type="InterPro" id="IPR007740">
    <property type="entry name" value="Ribosomal_mL49"/>
</dbReference>
<dbReference type="PANTHER" id="PTHR13477:SF0">
    <property type="entry name" value="LARGE RIBOSOMAL SUBUNIT PROTEIN ML49"/>
    <property type="match status" value="1"/>
</dbReference>
<dbReference type="PANTHER" id="PTHR13477">
    <property type="entry name" value="MITOCHONDRIAL 39S RIBOSOMAL PROTEIN L49"/>
    <property type="match status" value="1"/>
</dbReference>
<dbReference type="Pfam" id="PF05046">
    <property type="entry name" value="Img2"/>
    <property type="match status" value="1"/>
</dbReference>
<gene>
    <name type="primary">MRPL49</name>
    <name type="ORF">QflA-10086</name>
</gene>
<reference key="1">
    <citation type="submission" date="2005-06" db="EMBL/GenBank/DDBJ databases">
        <title>DNA sequences of macaque genes expressed in brain or testis and its evolutionary implications.</title>
        <authorList>
            <consortium name="International consortium for macaque cDNA sequencing and analysis"/>
        </authorList>
    </citation>
    <scope>NUCLEOTIDE SEQUENCE [LARGE SCALE MRNA]</scope>
    <source>
        <tissue>Frontal cortex</tissue>
    </source>
</reference>
<feature type="chain" id="PRO_0000207665" description="Large ribosomal subunit protein mL49">
    <location>
        <begin position="1"/>
        <end position="166"/>
    </location>
</feature>
<feature type="region of interest" description="Disordered" evidence="2">
    <location>
        <begin position="56"/>
        <end position="78"/>
    </location>
</feature>
<protein>
    <recommendedName>
        <fullName evidence="3">Large ribosomal subunit protein mL49</fullName>
    </recommendedName>
    <alternativeName>
        <fullName>39S ribosomal protein L49, mitochondrial</fullName>
        <shortName>L49mt</shortName>
        <shortName>MRP-L49</shortName>
    </alternativeName>
</protein>
<keyword id="KW-0496">Mitochondrion</keyword>
<keyword id="KW-1185">Reference proteome</keyword>
<keyword id="KW-0687">Ribonucleoprotein</keyword>
<keyword id="KW-0689">Ribosomal protein</keyword>
<accession>Q4R5K7</accession>
<name>RM49_MACFA</name>
<comment type="subunit">
    <text evidence="1">Interacts with OXA1L.</text>
</comment>
<comment type="subcellular location">
    <subcellularLocation>
        <location>Mitochondrion</location>
    </subcellularLocation>
</comment>
<comment type="similarity">
    <text evidence="3">Belongs to the mitochondrion-specific ribosomal protein mL49 family.</text>
</comment>
<sequence length="166" mass="19171">MAVTMFRAALRGWRTDVQRGCGLRLLSQTQGPPDYPSFVESVDEYQFVERLLPATRIPDPPKHEHYPTPSGWQPPRDPPPNLPYFVRRSRMHNVPVYKDITHGNRQMTVIRKVEGDIWALQKDVEDFLSPLLGKTPVTQVNEVTGTLRIKGYFDQELKAWLLEKGF</sequence>
<organism>
    <name type="scientific">Macaca fascicularis</name>
    <name type="common">Crab-eating macaque</name>
    <name type="synonym">Cynomolgus monkey</name>
    <dbReference type="NCBI Taxonomy" id="9541"/>
    <lineage>
        <taxon>Eukaryota</taxon>
        <taxon>Metazoa</taxon>
        <taxon>Chordata</taxon>
        <taxon>Craniata</taxon>
        <taxon>Vertebrata</taxon>
        <taxon>Euteleostomi</taxon>
        <taxon>Mammalia</taxon>
        <taxon>Eutheria</taxon>
        <taxon>Euarchontoglires</taxon>
        <taxon>Primates</taxon>
        <taxon>Haplorrhini</taxon>
        <taxon>Catarrhini</taxon>
        <taxon>Cercopithecidae</taxon>
        <taxon>Cercopithecinae</taxon>
        <taxon>Macaca</taxon>
    </lineage>
</organism>
<proteinExistence type="evidence at transcript level"/>
<evidence type="ECO:0000250" key="1"/>
<evidence type="ECO:0000256" key="2">
    <source>
        <dbReference type="SAM" id="MobiDB-lite"/>
    </source>
</evidence>
<evidence type="ECO:0000305" key="3"/>